<name>CX6B1_MACFA</name>
<organism>
    <name type="scientific">Macaca fascicularis</name>
    <name type="common">Crab-eating macaque</name>
    <name type="synonym">Cynomolgus monkey</name>
    <dbReference type="NCBI Taxonomy" id="9541"/>
    <lineage>
        <taxon>Eukaryota</taxon>
        <taxon>Metazoa</taxon>
        <taxon>Chordata</taxon>
        <taxon>Craniata</taxon>
        <taxon>Vertebrata</taxon>
        <taxon>Euteleostomi</taxon>
        <taxon>Mammalia</taxon>
        <taxon>Eutheria</taxon>
        <taxon>Euarchontoglires</taxon>
        <taxon>Primates</taxon>
        <taxon>Haplorrhini</taxon>
        <taxon>Catarrhini</taxon>
        <taxon>Cercopithecidae</taxon>
        <taxon>Cercopithecinae</taxon>
        <taxon>Macaca</taxon>
    </lineage>
</organism>
<reference key="1">
    <citation type="submission" date="2005-06" db="EMBL/GenBank/DDBJ databases">
        <title>DNA sequences of macaque genes expressed in brain or testis and its evolutionary implications.</title>
        <authorList>
            <consortium name="International consortium for macaque cDNA sequencing and analysis"/>
        </authorList>
    </citation>
    <scope>NUCLEOTIDE SEQUENCE [LARGE SCALE MRNA]</scope>
    <source>
        <tissue>Testis</tissue>
    </source>
</reference>
<dbReference type="EMBL" id="AB179393">
    <property type="protein sequence ID" value="BAE02444.1"/>
    <property type="molecule type" value="mRNA"/>
</dbReference>
<dbReference type="RefSeq" id="XP_005588934.1">
    <property type="nucleotide sequence ID" value="XM_005588877.2"/>
</dbReference>
<dbReference type="SMR" id="Q4R374"/>
<dbReference type="STRING" id="9541.ENSMFAP00000042151"/>
<dbReference type="Ensembl" id="ENSMFAT00000016431.2">
    <property type="protein sequence ID" value="ENSMFAP00000042151.1"/>
    <property type="gene ID" value="ENSMFAG00000039862.2"/>
</dbReference>
<dbReference type="GeneID" id="102143756"/>
<dbReference type="VEuPathDB" id="HostDB:ENSMFAG00000039862"/>
<dbReference type="eggNOG" id="KOG3057">
    <property type="taxonomic scope" value="Eukaryota"/>
</dbReference>
<dbReference type="GeneTree" id="ENSGT00940000156204"/>
<dbReference type="OMA" id="NEWIAKW"/>
<dbReference type="OrthoDB" id="47at314294"/>
<dbReference type="Proteomes" id="UP000233100">
    <property type="component" value="Chromosome 19"/>
</dbReference>
<dbReference type="Bgee" id="ENSMFAG00000039862">
    <property type="expression patterns" value="Expressed in heart and 13 other cell types or tissues"/>
</dbReference>
<dbReference type="GO" id="GO:0005743">
    <property type="term" value="C:mitochondrial inner membrane"/>
    <property type="evidence" value="ECO:0007669"/>
    <property type="project" value="Ensembl"/>
</dbReference>
<dbReference type="GO" id="GO:0005758">
    <property type="term" value="C:mitochondrial intermembrane space"/>
    <property type="evidence" value="ECO:0007669"/>
    <property type="project" value="UniProtKB-SubCell"/>
</dbReference>
<dbReference type="GO" id="GO:0045277">
    <property type="term" value="C:respiratory chain complex IV"/>
    <property type="evidence" value="ECO:0007669"/>
    <property type="project" value="Ensembl"/>
</dbReference>
<dbReference type="CDD" id="cd00926">
    <property type="entry name" value="Cyt_c_Oxidase_VIb"/>
    <property type="match status" value="1"/>
</dbReference>
<dbReference type="FunFam" id="1.10.10.140:FF:000001">
    <property type="entry name" value="Cytochrome c oxidase subunit 6B1"/>
    <property type="match status" value="1"/>
</dbReference>
<dbReference type="Gene3D" id="1.10.10.140">
    <property type="entry name" value="Cytochrome c oxidase, subunit VIb"/>
    <property type="match status" value="1"/>
</dbReference>
<dbReference type="InterPro" id="IPR048280">
    <property type="entry name" value="COX6B-like"/>
</dbReference>
<dbReference type="InterPro" id="IPR036549">
    <property type="entry name" value="CX6/COA6-like_sf"/>
</dbReference>
<dbReference type="InterPro" id="IPR003213">
    <property type="entry name" value="Cyt_c_oxidase_su6B"/>
</dbReference>
<dbReference type="PANTHER" id="PTHR11387">
    <property type="entry name" value="CYTOCHROME C OXIDASE SUBUNIT 6B"/>
    <property type="match status" value="1"/>
</dbReference>
<dbReference type="Pfam" id="PF02297">
    <property type="entry name" value="COX6B"/>
    <property type="match status" value="1"/>
</dbReference>
<dbReference type="PIRSF" id="PIRSF000278">
    <property type="entry name" value="Cyt_c_oxidase_6B"/>
    <property type="match status" value="1"/>
</dbReference>
<dbReference type="SUPFAM" id="SSF47694">
    <property type="entry name" value="Cytochrome c oxidase subunit h"/>
    <property type="match status" value="1"/>
</dbReference>
<dbReference type="PROSITE" id="PS51808">
    <property type="entry name" value="CHCH"/>
    <property type="match status" value="1"/>
</dbReference>
<protein>
    <recommendedName>
        <fullName>Cytochrome c oxidase subunit 6B1</fullName>
    </recommendedName>
    <alternativeName>
        <fullName>Cytochrome c oxidase subunit VIb isoform 1</fullName>
        <shortName>COX VIb-1</shortName>
    </alternativeName>
</protein>
<evidence type="ECO:0000250" key="1"/>
<evidence type="ECO:0000255" key="2">
    <source>
        <dbReference type="PROSITE-ProRule" id="PRU01150"/>
    </source>
</evidence>
<gene>
    <name type="primary">COX6B1</name>
    <name type="ORF">QtsA-19092</name>
</gene>
<keyword id="KW-1015">Disulfide bond</keyword>
<keyword id="KW-0496">Mitochondrion</keyword>
<keyword id="KW-1185">Reference proteome</keyword>
<sequence length="87" mass="10318">MAEEDIETKIKNYKTAPFDSRFPNQNQTRNCWQNYLDFHRCQKAMTTKGGNVSVCEWYQRVYQSLCPTSWVTDWDEQRAEGTFPGKI</sequence>
<feature type="chain" id="PRO_0000194913" description="Cytochrome c oxidase subunit 6B1">
    <location>
        <begin position="1"/>
        <end position="87"/>
    </location>
</feature>
<feature type="domain" description="CHCH" evidence="2">
    <location>
        <begin position="28"/>
        <end position="74"/>
    </location>
</feature>
<feature type="short sequence motif" description="Cx9C motif" evidence="2">
    <location>
        <begin position="31"/>
        <end position="41"/>
    </location>
</feature>
<feature type="short sequence motif" description="Cx10C motif" evidence="2">
    <location>
        <begin position="55"/>
        <end position="66"/>
    </location>
</feature>
<feature type="disulfide bond" evidence="2">
    <location>
        <begin position="31"/>
        <end position="66"/>
    </location>
</feature>
<feature type="disulfide bond" evidence="2">
    <location>
        <begin position="41"/>
        <end position="55"/>
    </location>
</feature>
<accession>Q4R374</accession>
<proteinExistence type="inferred from homology"/>
<comment type="function">
    <text evidence="1">Connects the two COX monomers into the physiological dimeric form.</text>
</comment>
<comment type="subcellular location">
    <subcellularLocation>
        <location evidence="1">Mitochondrion intermembrane space</location>
    </subcellularLocation>
</comment>